<evidence type="ECO:0000255" key="1">
    <source>
        <dbReference type="HAMAP-Rule" id="MF_00459"/>
    </source>
</evidence>
<protein>
    <recommendedName>
        <fullName evidence="1">Ion-translocating oxidoreductase complex subunit A</fullName>
        <ecNumber evidence="1">7.-.-.-</ecNumber>
    </recommendedName>
    <alternativeName>
        <fullName evidence="1">Rsx electron transport complex subunit A</fullName>
    </alternativeName>
</protein>
<dbReference type="EC" id="7.-.-.-" evidence="1"/>
<dbReference type="EMBL" id="AE005174">
    <property type="protein sequence ID" value="AAG56616.1"/>
    <property type="molecule type" value="Genomic_DNA"/>
</dbReference>
<dbReference type="EMBL" id="BA000007">
    <property type="protein sequence ID" value="BAB35759.1"/>
    <property type="molecule type" value="Genomic_DNA"/>
</dbReference>
<dbReference type="PIR" id="H90920">
    <property type="entry name" value="H90920"/>
</dbReference>
<dbReference type="RefSeq" id="NP_310363.1">
    <property type="nucleotide sequence ID" value="NC_002695.1"/>
</dbReference>
<dbReference type="RefSeq" id="WP_000133193.1">
    <property type="nucleotide sequence ID" value="NZ_VOAI01000007.1"/>
</dbReference>
<dbReference type="SMR" id="P0A768"/>
<dbReference type="STRING" id="155864.Z2633"/>
<dbReference type="GeneID" id="89516393"/>
<dbReference type="GeneID" id="912291"/>
<dbReference type="KEGG" id="ece:Z2633"/>
<dbReference type="KEGG" id="ecs:ECs_2336"/>
<dbReference type="PATRIC" id="fig|386585.9.peg.2445"/>
<dbReference type="eggNOG" id="COG4657">
    <property type="taxonomic scope" value="Bacteria"/>
</dbReference>
<dbReference type="HOGENOM" id="CLU_095255_1_0_6"/>
<dbReference type="OMA" id="ILGLCPF"/>
<dbReference type="Proteomes" id="UP000000558">
    <property type="component" value="Chromosome"/>
</dbReference>
<dbReference type="Proteomes" id="UP000002519">
    <property type="component" value="Chromosome"/>
</dbReference>
<dbReference type="GO" id="GO:0005886">
    <property type="term" value="C:plasma membrane"/>
    <property type="evidence" value="ECO:0007669"/>
    <property type="project" value="UniProtKB-SubCell"/>
</dbReference>
<dbReference type="GO" id="GO:0022900">
    <property type="term" value="P:electron transport chain"/>
    <property type="evidence" value="ECO:0007669"/>
    <property type="project" value="UniProtKB-UniRule"/>
</dbReference>
<dbReference type="HAMAP" id="MF_00459">
    <property type="entry name" value="RsxA_RnfA"/>
    <property type="match status" value="1"/>
</dbReference>
<dbReference type="InterPro" id="IPR011293">
    <property type="entry name" value="Ion_transpt_RnfA/RsxA"/>
</dbReference>
<dbReference type="InterPro" id="IPR003667">
    <property type="entry name" value="NqrDE/RnfAE"/>
</dbReference>
<dbReference type="InterPro" id="IPR050133">
    <property type="entry name" value="NqrDE/RnfAE_oxidrdctase"/>
</dbReference>
<dbReference type="NCBIfam" id="NF003481">
    <property type="entry name" value="PRK05151.1"/>
    <property type="match status" value="1"/>
</dbReference>
<dbReference type="NCBIfam" id="TIGR01943">
    <property type="entry name" value="rnfA"/>
    <property type="match status" value="1"/>
</dbReference>
<dbReference type="PANTHER" id="PTHR30335">
    <property type="entry name" value="INTEGRAL MEMBRANE PROTEIN OF SOXR-REDUCING COMPLEX"/>
    <property type="match status" value="1"/>
</dbReference>
<dbReference type="PANTHER" id="PTHR30335:SF0">
    <property type="entry name" value="ION-TRANSLOCATING OXIDOREDUCTASE COMPLEX SUBUNIT A"/>
    <property type="match status" value="1"/>
</dbReference>
<dbReference type="Pfam" id="PF02508">
    <property type="entry name" value="Rnf-Nqr"/>
    <property type="match status" value="1"/>
</dbReference>
<dbReference type="PIRSF" id="PIRSF006102">
    <property type="entry name" value="NQR_DE"/>
    <property type="match status" value="1"/>
</dbReference>
<accession>P0A768</accession>
<accession>P76181</accession>
<proteinExistence type="inferred from homology"/>
<reference key="1">
    <citation type="journal article" date="2001" name="Nature">
        <title>Genome sequence of enterohaemorrhagic Escherichia coli O157:H7.</title>
        <authorList>
            <person name="Perna N.T."/>
            <person name="Plunkett G. III"/>
            <person name="Burland V."/>
            <person name="Mau B."/>
            <person name="Glasner J.D."/>
            <person name="Rose D.J."/>
            <person name="Mayhew G.F."/>
            <person name="Evans P.S."/>
            <person name="Gregor J."/>
            <person name="Kirkpatrick H.A."/>
            <person name="Posfai G."/>
            <person name="Hackett J."/>
            <person name="Klink S."/>
            <person name="Boutin A."/>
            <person name="Shao Y."/>
            <person name="Miller L."/>
            <person name="Grotbeck E.J."/>
            <person name="Davis N.W."/>
            <person name="Lim A."/>
            <person name="Dimalanta E.T."/>
            <person name="Potamousis K."/>
            <person name="Apodaca J."/>
            <person name="Anantharaman T.S."/>
            <person name="Lin J."/>
            <person name="Yen G."/>
            <person name="Schwartz D.C."/>
            <person name="Welch R.A."/>
            <person name="Blattner F.R."/>
        </authorList>
    </citation>
    <scope>NUCLEOTIDE SEQUENCE [LARGE SCALE GENOMIC DNA]</scope>
    <source>
        <strain>O157:H7 / EDL933 / ATCC 700927 / EHEC</strain>
    </source>
</reference>
<reference key="2">
    <citation type="journal article" date="2001" name="DNA Res.">
        <title>Complete genome sequence of enterohemorrhagic Escherichia coli O157:H7 and genomic comparison with a laboratory strain K-12.</title>
        <authorList>
            <person name="Hayashi T."/>
            <person name="Makino K."/>
            <person name="Ohnishi M."/>
            <person name="Kurokawa K."/>
            <person name="Ishii K."/>
            <person name="Yokoyama K."/>
            <person name="Han C.-G."/>
            <person name="Ohtsubo E."/>
            <person name="Nakayama K."/>
            <person name="Murata T."/>
            <person name="Tanaka M."/>
            <person name="Tobe T."/>
            <person name="Iida T."/>
            <person name="Takami H."/>
            <person name="Honda T."/>
            <person name="Sasakawa C."/>
            <person name="Ogasawara N."/>
            <person name="Yasunaga T."/>
            <person name="Kuhara S."/>
            <person name="Shiba T."/>
            <person name="Hattori M."/>
            <person name="Shinagawa H."/>
        </authorList>
    </citation>
    <scope>NUCLEOTIDE SEQUENCE [LARGE SCALE GENOMIC DNA]</scope>
    <source>
        <strain>O157:H7 / Sakai / RIMD 0509952 / EHEC</strain>
    </source>
</reference>
<gene>
    <name evidence="1" type="primary">rsxA</name>
    <name type="ordered locus">Z2633</name>
    <name type="ordered locus">ECs2336</name>
</gene>
<feature type="chain" id="PRO_0000214290" description="Ion-translocating oxidoreductase complex subunit A">
    <location>
        <begin position="1"/>
        <end position="193"/>
    </location>
</feature>
<feature type="transmembrane region" description="Helical" evidence="1">
    <location>
        <begin position="5"/>
        <end position="25"/>
    </location>
</feature>
<feature type="transmembrane region" description="Helical" evidence="1">
    <location>
        <begin position="39"/>
        <end position="59"/>
    </location>
</feature>
<feature type="transmembrane region" description="Helical" evidence="1">
    <location>
        <begin position="63"/>
        <end position="83"/>
    </location>
</feature>
<feature type="transmembrane region" description="Helical" evidence="1">
    <location>
        <begin position="102"/>
        <end position="122"/>
    </location>
</feature>
<feature type="transmembrane region" description="Helical" evidence="1">
    <location>
        <begin position="134"/>
        <end position="154"/>
    </location>
</feature>
<feature type="transmembrane region" description="Helical" evidence="1">
    <location>
        <begin position="171"/>
        <end position="191"/>
    </location>
</feature>
<sequence length="193" mass="20898">MTDYLLLFVGTVLVNNFVLVKFLGLCPFMGVSKKLETAMGMGLATTFVMTLASICAWLIDTWILIPLNLIYLRTLAFILVIAVVVQFTEMVVRKTSPVLYRLLGIFLPLITTNCAVLGVALLNINLGHNFLQSALYGFSAAVGFSLVMVLFAAIRERLAVADVPAPFRGNAIALITAGLMSLAFMGFSGLVKL</sequence>
<organism>
    <name type="scientific">Escherichia coli O157:H7</name>
    <dbReference type="NCBI Taxonomy" id="83334"/>
    <lineage>
        <taxon>Bacteria</taxon>
        <taxon>Pseudomonadati</taxon>
        <taxon>Pseudomonadota</taxon>
        <taxon>Gammaproteobacteria</taxon>
        <taxon>Enterobacterales</taxon>
        <taxon>Enterobacteriaceae</taxon>
        <taxon>Escherichia</taxon>
    </lineage>
</organism>
<comment type="function">
    <text evidence="1">Part of a membrane-bound complex that couples electron transfer with translocation of ions across the membrane. Required to maintain the reduced state of SoxR.</text>
</comment>
<comment type="subunit">
    <text evidence="1">The complex is composed of six subunits: RsxA, RsxB, RsxC, RsxD, RsxE and RsxG.</text>
</comment>
<comment type="subcellular location">
    <subcellularLocation>
        <location evidence="1">Cell inner membrane</location>
        <topology evidence="1">Multi-pass membrane protein</topology>
    </subcellularLocation>
</comment>
<comment type="similarity">
    <text evidence="1">Belongs to the NqrDE/RnfAE family.</text>
</comment>
<keyword id="KW-0997">Cell inner membrane</keyword>
<keyword id="KW-1003">Cell membrane</keyword>
<keyword id="KW-0249">Electron transport</keyword>
<keyword id="KW-0472">Membrane</keyword>
<keyword id="KW-1185">Reference proteome</keyword>
<keyword id="KW-1278">Translocase</keyword>
<keyword id="KW-0812">Transmembrane</keyword>
<keyword id="KW-1133">Transmembrane helix</keyword>
<keyword id="KW-0813">Transport</keyword>
<name>RSXA_ECO57</name>